<proteinExistence type="inferred from homology"/>
<accession>A9M5E6</accession>
<name>KDSA_BRUC2</name>
<evidence type="ECO:0000255" key="1">
    <source>
        <dbReference type="HAMAP-Rule" id="MF_00056"/>
    </source>
</evidence>
<feature type="chain" id="PRO_1000074980" description="2-dehydro-3-deoxyphosphooctonate aldolase">
    <location>
        <begin position="1"/>
        <end position="277"/>
    </location>
</feature>
<reference key="1">
    <citation type="submission" date="2007-10" db="EMBL/GenBank/DDBJ databases">
        <title>Brucella canis ATCC 23365 whole genome shotgun sequencing project.</title>
        <authorList>
            <person name="Setubal J.C."/>
            <person name="Bowns C."/>
            <person name="Boyle S."/>
            <person name="Crasta O.R."/>
            <person name="Czar M.J."/>
            <person name="Dharmanolla C."/>
            <person name="Gillespie J.J."/>
            <person name="Kenyon R.W."/>
            <person name="Lu J."/>
            <person name="Mane S."/>
            <person name="Mohapatra S."/>
            <person name="Nagrani S."/>
            <person name="Purkayastha A."/>
            <person name="Rajasimha H.K."/>
            <person name="Shallom J.M."/>
            <person name="Shallom S."/>
            <person name="Shukla M."/>
            <person name="Snyder E.E."/>
            <person name="Sobral B.W."/>
            <person name="Wattam A.R."/>
            <person name="Will R."/>
            <person name="Williams K."/>
            <person name="Yoo H."/>
            <person name="Bruce D."/>
            <person name="Detter C."/>
            <person name="Munk C."/>
            <person name="Brettin T.S."/>
        </authorList>
    </citation>
    <scope>NUCLEOTIDE SEQUENCE [LARGE SCALE GENOMIC DNA]</scope>
    <source>
        <strain>ATCC 23365 / NCTC 10854 / RM-666</strain>
    </source>
</reference>
<organism>
    <name type="scientific">Brucella canis (strain ATCC 23365 / NCTC 10854 / RM-666)</name>
    <dbReference type="NCBI Taxonomy" id="483179"/>
    <lineage>
        <taxon>Bacteria</taxon>
        <taxon>Pseudomonadati</taxon>
        <taxon>Pseudomonadota</taxon>
        <taxon>Alphaproteobacteria</taxon>
        <taxon>Hyphomicrobiales</taxon>
        <taxon>Brucellaceae</taxon>
        <taxon>Brucella/Ochrobactrum group</taxon>
        <taxon>Brucella</taxon>
    </lineage>
</organism>
<protein>
    <recommendedName>
        <fullName evidence="1">2-dehydro-3-deoxyphosphooctonate aldolase</fullName>
        <ecNumber evidence="1">2.5.1.55</ecNumber>
    </recommendedName>
    <alternativeName>
        <fullName evidence="1">3-deoxy-D-manno-octulosonic acid 8-phosphate synthase</fullName>
    </alternativeName>
    <alternativeName>
        <fullName evidence="1">KDO-8-phosphate synthase</fullName>
        <shortName evidence="1">KDO 8-P synthase</shortName>
        <shortName evidence="1">KDOPS</shortName>
    </alternativeName>
    <alternativeName>
        <fullName evidence="1">Phospho-2-dehydro-3-deoxyoctonate aldolase</fullName>
    </alternativeName>
</protein>
<gene>
    <name evidence="1" type="primary">kdsA</name>
    <name type="ordered locus">BCAN_A1152</name>
</gene>
<comment type="catalytic activity">
    <reaction evidence="1">
        <text>D-arabinose 5-phosphate + phosphoenolpyruvate + H2O = 3-deoxy-alpha-D-manno-2-octulosonate-8-phosphate + phosphate</text>
        <dbReference type="Rhea" id="RHEA:14053"/>
        <dbReference type="ChEBI" id="CHEBI:15377"/>
        <dbReference type="ChEBI" id="CHEBI:43474"/>
        <dbReference type="ChEBI" id="CHEBI:57693"/>
        <dbReference type="ChEBI" id="CHEBI:58702"/>
        <dbReference type="ChEBI" id="CHEBI:85985"/>
        <dbReference type="EC" id="2.5.1.55"/>
    </reaction>
</comment>
<comment type="pathway">
    <text evidence="1">Carbohydrate biosynthesis; 3-deoxy-D-manno-octulosonate biosynthesis; 3-deoxy-D-manno-octulosonate from D-ribulose 5-phosphate: step 2/3.</text>
</comment>
<comment type="pathway">
    <text evidence="1">Bacterial outer membrane biogenesis; lipopolysaccharide biosynthesis.</text>
</comment>
<comment type="subcellular location">
    <subcellularLocation>
        <location evidence="1">Cytoplasm</location>
    </subcellularLocation>
</comment>
<comment type="similarity">
    <text evidence="1">Belongs to the KdsA family.</text>
</comment>
<sequence length="277" mass="29479">MVTANSTVKVGNVTFSNSAPLALIAGPCQMETRDHAFEMAGHLKEMTDKLGIGLVYKSSFDKANRTSLKAARGIGLEKALEVFSDLKKEYGFPVLTDIHTEEQCAAVAPVVDVLQIPAFLCRQTDLLIAAARTGRVVNVKKGQFLAPWDMKNVLAKITESGNPNVLATERGVSFGYNTLVSDMRALPIMAGLGAPVIFDATHSVQQPGGQGGSTGGQREFVETLARAAVAVGVAGLFIETHEDPDNAPSDGPNMVPIDKMPALLEKLMAFDRIAKAL</sequence>
<dbReference type="EC" id="2.5.1.55" evidence="1"/>
<dbReference type="EMBL" id="CP000872">
    <property type="protein sequence ID" value="ABX62201.1"/>
    <property type="molecule type" value="Genomic_DNA"/>
</dbReference>
<dbReference type="RefSeq" id="WP_004690885.1">
    <property type="nucleotide sequence ID" value="NC_010103.1"/>
</dbReference>
<dbReference type="SMR" id="A9M5E6"/>
<dbReference type="GeneID" id="55590817"/>
<dbReference type="KEGG" id="bcs:BCAN_A1152"/>
<dbReference type="HOGENOM" id="CLU_036666_0_0_5"/>
<dbReference type="PhylomeDB" id="A9M5E6"/>
<dbReference type="UniPathway" id="UPA00030"/>
<dbReference type="UniPathway" id="UPA00357">
    <property type="reaction ID" value="UER00474"/>
</dbReference>
<dbReference type="Proteomes" id="UP000001385">
    <property type="component" value="Chromosome I"/>
</dbReference>
<dbReference type="GO" id="GO:0005737">
    <property type="term" value="C:cytoplasm"/>
    <property type="evidence" value="ECO:0007669"/>
    <property type="project" value="UniProtKB-SubCell"/>
</dbReference>
<dbReference type="GO" id="GO:0008676">
    <property type="term" value="F:3-deoxy-8-phosphooctulonate synthase activity"/>
    <property type="evidence" value="ECO:0007669"/>
    <property type="project" value="UniProtKB-UniRule"/>
</dbReference>
<dbReference type="GO" id="GO:0019294">
    <property type="term" value="P:keto-3-deoxy-D-manno-octulosonic acid biosynthetic process"/>
    <property type="evidence" value="ECO:0007669"/>
    <property type="project" value="UniProtKB-UniRule"/>
</dbReference>
<dbReference type="Gene3D" id="3.20.20.70">
    <property type="entry name" value="Aldolase class I"/>
    <property type="match status" value="1"/>
</dbReference>
<dbReference type="HAMAP" id="MF_00056">
    <property type="entry name" value="KDO8P_synth"/>
    <property type="match status" value="1"/>
</dbReference>
<dbReference type="InterPro" id="IPR013785">
    <property type="entry name" value="Aldolase_TIM"/>
</dbReference>
<dbReference type="InterPro" id="IPR006218">
    <property type="entry name" value="DAHP1/KDSA"/>
</dbReference>
<dbReference type="InterPro" id="IPR006269">
    <property type="entry name" value="KDO8P_synthase"/>
</dbReference>
<dbReference type="NCBIfam" id="TIGR01362">
    <property type="entry name" value="KDO8P_synth"/>
    <property type="match status" value="1"/>
</dbReference>
<dbReference type="NCBIfam" id="NF003543">
    <property type="entry name" value="PRK05198.1"/>
    <property type="match status" value="1"/>
</dbReference>
<dbReference type="PANTHER" id="PTHR21057">
    <property type="entry name" value="PHOSPHO-2-DEHYDRO-3-DEOXYHEPTONATE ALDOLASE"/>
    <property type="match status" value="1"/>
</dbReference>
<dbReference type="Pfam" id="PF00793">
    <property type="entry name" value="DAHP_synth_1"/>
    <property type="match status" value="1"/>
</dbReference>
<dbReference type="SUPFAM" id="SSF51569">
    <property type="entry name" value="Aldolase"/>
    <property type="match status" value="1"/>
</dbReference>
<keyword id="KW-0963">Cytoplasm</keyword>
<keyword id="KW-0448">Lipopolysaccharide biosynthesis</keyword>
<keyword id="KW-1185">Reference proteome</keyword>
<keyword id="KW-0808">Transferase</keyword>